<gene>
    <name type="primary">Ubash3b</name>
    <name type="synonym">Sts1</name>
</gene>
<name>UBS3B_MOUSE</name>
<keyword id="KW-0002">3D-structure</keyword>
<keyword id="KW-0025">Alternative splicing</keyword>
<keyword id="KW-0963">Cytoplasm</keyword>
<keyword id="KW-0903">Direct protein sequencing</keyword>
<keyword id="KW-0378">Hydrolase</keyword>
<keyword id="KW-0539">Nucleus</keyword>
<keyword id="KW-0597">Phosphoprotein</keyword>
<keyword id="KW-0904">Protein phosphatase</keyword>
<keyword id="KW-1185">Reference proteome</keyword>
<keyword id="KW-0728">SH3 domain</keyword>
<organism>
    <name type="scientific">Mus musculus</name>
    <name type="common">Mouse</name>
    <dbReference type="NCBI Taxonomy" id="10090"/>
    <lineage>
        <taxon>Eukaryota</taxon>
        <taxon>Metazoa</taxon>
        <taxon>Chordata</taxon>
        <taxon>Craniata</taxon>
        <taxon>Vertebrata</taxon>
        <taxon>Euteleostomi</taxon>
        <taxon>Mammalia</taxon>
        <taxon>Eutheria</taxon>
        <taxon>Euarchontoglires</taxon>
        <taxon>Glires</taxon>
        <taxon>Rodentia</taxon>
        <taxon>Myomorpha</taxon>
        <taxon>Muroidea</taxon>
        <taxon>Muridae</taxon>
        <taxon>Murinae</taxon>
        <taxon>Mus</taxon>
        <taxon>Mus</taxon>
    </lineage>
</organism>
<comment type="function">
    <text evidence="6 7 8 10">Interferes with CBL-mediated down-regulation and degradation of receptor-type tyrosine kinases. Promotes accumulation of activated target receptors, such as T-cell receptors and EGFR, on the cell surface. Exhibits tyrosine phosphatase activity toward several substrates including EGFR, FAK, SYK, and ZAP70. Down-regulates proteins that are dually modified by both protein tyrosine phosphorylation and ubiquitination.</text>
</comment>
<comment type="catalytic activity">
    <reaction evidence="11">
        <text>O-phospho-L-tyrosyl-[protein] + H2O = L-tyrosyl-[protein] + phosphate</text>
        <dbReference type="Rhea" id="RHEA:10684"/>
        <dbReference type="Rhea" id="RHEA-COMP:10136"/>
        <dbReference type="Rhea" id="RHEA-COMP:20101"/>
        <dbReference type="ChEBI" id="CHEBI:15377"/>
        <dbReference type="ChEBI" id="CHEBI:43474"/>
        <dbReference type="ChEBI" id="CHEBI:46858"/>
        <dbReference type="ChEBI" id="CHEBI:61978"/>
        <dbReference type="EC" id="3.1.3.48"/>
    </reaction>
</comment>
<comment type="subunit">
    <text evidence="2 5 7 9 12">Homodimer (PubMed:17679096, PubMed:20516590). Interacts with JAK2 (in vitro) (PubMed:12370296). Interacts with CBL. Part of a complex containing CBL and activated EGFR. Interacts with ubiquitin and with mono-ubiquitinated proteins (By similarity). Interacts with ZAP70 (ubiquitinated form) (PubMed:26903241).</text>
</comment>
<comment type="interaction">
    <interactant intactId="EBI-8846415">
        <id>Q8BGG7</id>
    </interactant>
    <interactant intactId="EBI-1211276">
        <id>P43403</id>
        <label>ZAP70</label>
    </interactant>
    <organismsDiffer>true</organismsDiffer>
    <experiments>10</experiments>
</comment>
<comment type="subcellular location">
    <subcellularLocation>
        <location evidence="1">Cytoplasm</location>
    </subcellularLocation>
    <subcellularLocation>
        <location evidence="14">Nucleus</location>
    </subcellularLocation>
</comment>
<comment type="alternative products">
    <event type="alternative splicing"/>
    <isoform>
        <id>Q8BGG7-1</id>
        <name>1</name>
        <sequence type="displayed"/>
    </isoform>
    <isoform>
        <id>Q8BGG7-2</id>
        <name>2</name>
        <sequence type="described" ref="VSP_019716"/>
    </isoform>
</comment>
<comment type="tissue specificity">
    <text evidence="5 6">Detected in splenic T-cells and B-cells, total spleen, skeletal muscle, heart, lung, kidney, thymus, brain and liver (at protein level). Highly expressed in brain. Detected in heart, spleen, lung, liver, kidney and testis.</text>
</comment>
<comment type="disruption phenotype">
    <text evidence="8 10">Mice display strikingly elevated levels of tyrosine phosphorylated, ubiquitinated proteins following TCR stimulation. They are prothrombotic and have shorter bleeding times, which is attributed to insufficient SYK dephosphorylation in platelets.</text>
</comment>
<evidence type="ECO:0000250" key="1"/>
<evidence type="ECO:0000250" key="2">
    <source>
        <dbReference type="UniProtKB" id="Q8TF42"/>
    </source>
</evidence>
<evidence type="ECO:0000255" key="3">
    <source>
        <dbReference type="PROSITE-ProRule" id="PRU00192"/>
    </source>
</evidence>
<evidence type="ECO:0000255" key="4">
    <source>
        <dbReference type="PROSITE-ProRule" id="PRU00212"/>
    </source>
</evidence>
<evidence type="ECO:0000269" key="5">
    <source>
    </source>
</evidence>
<evidence type="ECO:0000269" key="6">
    <source>
    </source>
</evidence>
<evidence type="ECO:0000269" key="7">
    <source>
    </source>
</evidence>
<evidence type="ECO:0000269" key="8">
    <source>
    </source>
</evidence>
<evidence type="ECO:0000269" key="9">
    <source>
    </source>
</evidence>
<evidence type="ECO:0000269" key="10">
    <source>
    </source>
</evidence>
<evidence type="ECO:0000269" key="11">
    <source>
    </source>
</evidence>
<evidence type="ECO:0000269" key="12">
    <source>
    </source>
</evidence>
<evidence type="ECO:0000303" key="13">
    <source>
    </source>
</evidence>
<evidence type="ECO:0000305" key="14"/>
<evidence type="ECO:0007829" key="15">
    <source>
        <dbReference type="PDB" id="2H0Q"/>
    </source>
</evidence>
<evidence type="ECO:0007829" key="16">
    <source>
        <dbReference type="PDB" id="3MBK"/>
    </source>
</evidence>
<feature type="chain" id="PRO_0000245509" description="Ubiquitin-associated and SH3 domain-containing protein B">
    <location>
        <begin position="1"/>
        <end position="638"/>
    </location>
</feature>
<feature type="domain" description="UBA" evidence="4">
    <location>
        <begin position="23"/>
        <end position="65"/>
    </location>
</feature>
<feature type="domain" description="SH3" evidence="3">
    <location>
        <begin position="243"/>
        <end position="308"/>
    </location>
</feature>
<feature type="region of interest" description="Protein tyrosine phosphatase">
    <location>
        <begin position="369"/>
        <end position="638"/>
    </location>
</feature>
<feature type="active site">
    <location>
        <position position="379"/>
    </location>
</feature>
<feature type="active site" description="Tele-phosphohistidine intermediate">
    <location>
        <position position="380"/>
    </location>
</feature>
<feature type="active site">
    <location>
        <position position="565"/>
    </location>
</feature>
<feature type="modified residue" description="Phosphoserine" evidence="2">
    <location>
        <position position="9"/>
    </location>
</feature>
<feature type="modified residue" description="Phosphothreonine" evidence="2">
    <location>
        <position position="12"/>
    </location>
</feature>
<feature type="splice variant" id="VSP_019716" description="In isoform 2." evidence="13">
    <location>
        <begin position="1"/>
        <end position="122"/>
    </location>
</feature>
<feature type="sequence conflict" description="In Ref. 2; BAE30779/BAE30875." evidence="14" ref="2">
    <original>E</original>
    <variation>G</variation>
    <location>
        <position position="300"/>
    </location>
</feature>
<feature type="strand" evidence="16">
    <location>
        <begin position="374"/>
        <end position="379"/>
    </location>
</feature>
<feature type="helix" evidence="16">
    <location>
        <begin position="384"/>
        <end position="388"/>
    </location>
</feature>
<feature type="helix" evidence="16">
    <location>
        <begin position="392"/>
        <end position="395"/>
    </location>
</feature>
<feature type="helix" evidence="16">
    <location>
        <begin position="421"/>
        <end position="424"/>
    </location>
</feature>
<feature type="helix" evidence="16">
    <location>
        <begin position="432"/>
        <end position="447"/>
    </location>
</feature>
<feature type="strand" evidence="16">
    <location>
        <begin position="454"/>
        <end position="457"/>
    </location>
</feature>
<feature type="helix" evidence="16">
    <location>
        <begin position="461"/>
        <end position="473"/>
    </location>
</feature>
<feature type="turn" evidence="16">
    <location>
        <begin position="477"/>
        <end position="479"/>
    </location>
</feature>
<feature type="strand" evidence="16">
    <location>
        <begin position="482"/>
        <end position="484"/>
    </location>
</feature>
<feature type="helix" evidence="16">
    <location>
        <begin position="486"/>
        <end position="488"/>
    </location>
</feature>
<feature type="helix" evidence="16">
    <location>
        <begin position="492"/>
        <end position="494"/>
    </location>
</feature>
<feature type="strand" evidence="16">
    <location>
        <begin position="495"/>
        <end position="499"/>
    </location>
</feature>
<feature type="helix" evidence="16">
    <location>
        <begin position="506"/>
        <end position="511"/>
    </location>
</feature>
<feature type="helix" evidence="16">
    <location>
        <begin position="526"/>
        <end position="528"/>
    </location>
</feature>
<feature type="helix" evidence="16">
    <location>
        <begin position="535"/>
        <end position="553"/>
    </location>
</feature>
<feature type="turn" evidence="15">
    <location>
        <begin position="554"/>
        <end position="556"/>
    </location>
</feature>
<feature type="strand" evidence="16">
    <location>
        <begin position="558"/>
        <end position="564"/>
    </location>
</feature>
<feature type="helix" evidence="16">
    <location>
        <begin position="568"/>
        <end position="571"/>
    </location>
</feature>
<feature type="turn" evidence="16">
    <location>
        <begin position="572"/>
        <end position="574"/>
    </location>
</feature>
<feature type="helix" evidence="16">
    <location>
        <begin position="575"/>
        <end position="577"/>
    </location>
</feature>
<feature type="helix" evidence="16">
    <location>
        <begin position="584"/>
        <end position="591"/>
    </location>
</feature>
<feature type="strand" evidence="16">
    <location>
        <begin position="599"/>
        <end position="604"/>
    </location>
</feature>
<feature type="strand" evidence="16">
    <location>
        <begin position="606"/>
        <end position="608"/>
    </location>
</feature>
<feature type="strand" evidence="16">
    <location>
        <begin position="611"/>
        <end position="614"/>
    </location>
</feature>
<feature type="helix" evidence="16">
    <location>
        <begin position="631"/>
        <end position="635"/>
    </location>
</feature>
<sequence>MAAREELYSKVTPRRDRLQRPGTVKHGSALDVLLSMGFPRARAQKALASTGGRSVQAACDWLFSHVGDPFLDDPLPREYVLYLRPTGPLAQKLSDFWQQSKQICGKNKAHNIFPHITLCQFFMCEDSKVDALGEALQTTVSRWKCKFSAPLPLELYTSSNFIGLFVKEDSAEVLKKFAADFAAEAASKTEVHVEPHKKQLHVTLAYHFQASHLPTLEKLAQNIDVKLGCDWVATIFSRDIRFANHETLQVIYPYSPQNDDELELVPGDFIFMSPMEQTSTSEGWIYGTSLTTGCSGLLPENYITKADECSTWIFHGSYSILNTVSSSSLAFGDGALERRQYEDQGLGETTPLTIICQPMQPLRVNSQPGPQKRCLFVCRHGERMDVVFGKYWLSQCFDAKGRYIRTNLNMPHSLPQRSGGFRDYEKDAPITVFGCMQARLVGEALLESNTVIDHVYCSPSLRCVQTAHNILKGLQQDNHLKIRVEPGLFEWTKWVAGSTLPAWIPPSELAAANLSVDTTYRPHIPVSKLAISESYDTYINRSFQVTKEIISECKSKGNNILIVAHASSLEACTCQLQGLSPQNSKDFVQMVRKIPYLGFCSCEELGETGIWQLTDPPILPLTHGPTGGFNWRETLLQE</sequence>
<proteinExistence type="evidence at protein level"/>
<protein>
    <recommendedName>
        <fullName>Ubiquitin-associated and SH3 domain-containing protein B</fullName>
        <ecNumber>3.1.3.48</ecNumber>
    </recommendedName>
    <alternativeName>
        <fullName>Cbl-interacting protein p70</fullName>
    </alternativeName>
    <alternativeName>
        <fullName>Suppressor of T-cell receptor signaling 1</fullName>
        <shortName>STS-1</shortName>
    </alternativeName>
    <alternativeName>
        <fullName>T-cell ubiquitin ligand 2</fullName>
        <shortName>TULA-2</shortName>
    </alternativeName>
    <alternativeName>
        <fullName>Tyrosine-protein phosphatase STS1/TULA2</fullName>
    </alternativeName>
</protein>
<accession>Q8BGG7</accession>
<accession>Q3U8Z2</accession>
<accession>Q8BMW9</accession>
<dbReference type="EC" id="3.1.3.48"/>
<dbReference type="EMBL" id="AB075602">
    <property type="protein sequence ID" value="BAD06450.1"/>
    <property type="molecule type" value="mRNA"/>
</dbReference>
<dbReference type="EMBL" id="AK013361">
    <property type="protein sequence ID" value="BAC25403.1"/>
    <property type="molecule type" value="mRNA"/>
</dbReference>
<dbReference type="EMBL" id="AK034450">
    <property type="protein sequence ID" value="BAC28714.1"/>
    <property type="molecule type" value="mRNA"/>
</dbReference>
<dbReference type="EMBL" id="AK035764">
    <property type="protein sequence ID" value="BAC29178.1"/>
    <property type="molecule type" value="mRNA"/>
</dbReference>
<dbReference type="EMBL" id="AK133948">
    <property type="protein sequence ID" value="BAE21945.1"/>
    <property type="molecule type" value="mRNA"/>
</dbReference>
<dbReference type="EMBL" id="AK151895">
    <property type="protein sequence ID" value="BAE30779.1"/>
    <property type="molecule type" value="mRNA"/>
</dbReference>
<dbReference type="EMBL" id="AK152013">
    <property type="protein sequence ID" value="BAE30875.1"/>
    <property type="molecule type" value="mRNA"/>
</dbReference>
<dbReference type="EMBL" id="AK154576">
    <property type="protein sequence ID" value="BAE32688.1"/>
    <property type="molecule type" value="mRNA"/>
</dbReference>
<dbReference type="EMBL" id="BC053436">
    <property type="protein sequence ID" value="AAH53436.1"/>
    <property type="molecule type" value="mRNA"/>
</dbReference>
<dbReference type="CCDS" id="CCDS23085.1">
    <molecule id="Q8BGG7-1"/>
</dbReference>
<dbReference type="CCDS" id="CCDS90541.1">
    <molecule id="Q8BGG7-2"/>
</dbReference>
<dbReference type="RefSeq" id="NP_001344341.1">
    <molecule id="Q8BGG7-2"/>
    <property type="nucleotide sequence ID" value="NM_001357412.1"/>
</dbReference>
<dbReference type="RefSeq" id="NP_789830.1">
    <molecule id="Q8BGG7-1"/>
    <property type="nucleotide sequence ID" value="NM_176860.6"/>
</dbReference>
<dbReference type="RefSeq" id="XP_006510700.1">
    <property type="nucleotide sequence ID" value="XM_006510637.3"/>
</dbReference>
<dbReference type="RefSeq" id="XP_017169101.1">
    <molecule id="Q8BGG7-2"/>
    <property type="nucleotide sequence ID" value="XM_017313612.2"/>
</dbReference>
<dbReference type="RefSeq" id="XP_030100498.1">
    <molecule id="Q8BGG7-2"/>
    <property type="nucleotide sequence ID" value="XM_030244638.1"/>
</dbReference>
<dbReference type="PDB" id="2H0Q">
    <property type="method" value="X-ray"/>
    <property type="resolution" value="1.82 A"/>
    <property type="chains" value="A/B/C=373-633"/>
</dbReference>
<dbReference type="PDB" id="2IKQ">
    <property type="method" value="X-ray"/>
    <property type="resolution" value="2.61 A"/>
    <property type="chains" value="A/B/M=369-638"/>
</dbReference>
<dbReference type="PDB" id="3MBK">
    <property type="method" value="X-ray"/>
    <property type="resolution" value="1.35 A"/>
    <property type="chains" value="A/B=373-636"/>
</dbReference>
<dbReference type="PDBsum" id="2H0Q"/>
<dbReference type="PDBsum" id="2IKQ"/>
<dbReference type="PDBsum" id="3MBK"/>
<dbReference type="BMRB" id="Q8BGG7"/>
<dbReference type="SMR" id="Q8BGG7"/>
<dbReference type="BioGRID" id="215592">
    <property type="interactions" value="24"/>
</dbReference>
<dbReference type="FunCoup" id="Q8BGG7">
    <property type="interactions" value="1665"/>
</dbReference>
<dbReference type="IntAct" id="Q8BGG7">
    <property type="interactions" value="5"/>
</dbReference>
<dbReference type="MINT" id="Q8BGG7"/>
<dbReference type="STRING" id="10090.ENSMUSP00000043865"/>
<dbReference type="iPTMnet" id="Q8BGG7"/>
<dbReference type="PhosphoSitePlus" id="Q8BGG7"/>
<dbReference type="jPOST" id="Q8BGG7"/>
<dbReference type="PaxDb" id="10090-ENSMUSP00000043865"/>
<dbReference type="PeptideAtlas" id="Q8BGG7"/>
<dbReference type="ProteomicsDB" id="297716">
    <molecule id="Q8BGG7-1"/>
</dbReference>
<dbReference type="ProteomicsDB" id="297717">
    <molecule id="Q8BGG7-2"/>
</dbReference>
<dbReference type="Antibodypedia" id="32801">
    <property type="antibodies" value="148 antibodies from 26 providers"/>
</dbReference>
<dbReference type="DNASU" id="72828"/>
<dbReference type="Ensembl" id="ENSMUST00000044155.15">
    <molecule id="Q8BGG7-1"/>
    <property type="protein sequence ID" value="ENSMUSP00000043865.9"/>
    <property type="gene ID" value="ENSMUSG00000032020.16"/>
</dbReference>
<dbReference type="Ensembl" id="ENSMUST00000151485.8">
    <molecule id="Q8BGG7-2"/>
    <property type="protein sequence ID" value="ENSMUSP00000116038.2"/>
    <property type="gene ID" value="ENSMUSG00000032020.16"/>
</dbReference>
<dbReference type="GeneID" id="72828"/>
<dbReference type="KEGG" id="mmu:72828"/>
<dbReference type="UCSC" id="uc009pag.1">
    <molecule id="Q8BGG7-1"/>
    <property type="organism name" value="mouse"/>
</dbReference>
<dbReference type="AGR" id="MGI:1920078"/>
<dbReference type="CTD" id="84959"/>
<dbReference type="MGI" id="MGI:1920078">
    <property type="gene designation" value="Ubash3b"/>
</dbReference>
<dbReference type="VEuPathDB" id="HostDB:ENSMUSG00000032020"/>
<dbReference type="eggNOG" id="KOG3734">
    <property type="taxonomic scope" value="Eukaryota"/>
</dbReference>
<dbReference type="GeneTree" id="ENSGT00940000156097"/>
<dbReference type="HOGENOM" id="CLU_016516_1_0_1"/>
<dbReference type="InParanoid" id="Q8BGG7"/>
<dbReference type="OMA" id="NMPKEIP"/>
<dbReference type="OrthoDB" id="414418at2759"/>
<dbReference type="PhylomeDB" id="Q8BGG7"/>
<dbReference type="TreeFam" id="TF313334"/>
<dbReference type="BioGRID-ORCS" id="72828">
    <property type="hits" value="3 hits in 79 CRISPR screens"/>
</dbReference>
<dbReference type="CD-CODE" id="CE726F99">
    <property type="entry name" value="Postsynaptic density"/>
</dbReference>
<dbReference type="ChiTaRS" id="Ubash3b">
    <property type="organism name" value="mouse"/>
</dbReference>
<dbReference type="EvolutionaryTrace" id="Q8BGG7"/>
<dbReference type="PRO" id="PR:Q8BGG7"/>
<dbReference type="Proteomes" id="UP000000589">
    <property type="component" value="Chromosome 9"/>
</dbReference>
<dbReference type="RNAct" id="Q8BGG7">
    <property type="molecule type" value="protein"/>
</dbReference>
<dbReference type="Bgee" id="ENSMUSG00000032020">
    <property type="expression patterns" value="Expressed in lumbar dorsal root ganglion and 207 other cell types or tissues"/>
</dbReference>
<dbReference type="ExpressionAtlas" id="Q8BGG7">
    <property type="expression patterns" value="baseline and differential"/>
</dbReference>
<dbReference type="GO" id="GO:0005737">
    <property type="term" value="C:cytoplasm"/>
    <property type="evidence" value="ECO:0007669"/>
    <property type="project" value="UniProtKB-SubCell"/>
</dbReference>
<dbReference type="GO" id="GO:0005634">
    <property type="term" value="C:nucleus"/>
    <property type="evidence" value="ECO:0007669"/>
    <property type="project" value="UniProtKB-SubCell"/>
</dbReference>
<dbReference type="GO" id="GO:0042802">
    <property type="term" value="F:identical protein binding"/>
    <property type="evidence" value="ECO:0007669"/>
    <property type="project" value="Ensembl"/>
</dbReference>
<dbReference type="GO" id="GO:0051219">
    <property type="term" value="F:phosphoprotein binding"/>
    <property type="evidence" value="ECO:0000314"/>
    <property type="project" value="MGI"/>
</dbReference>
<dbReference type="GO" id="GO:0004725">
    <property type="term" value="F:protein tyrosine phosphatase activity"/>
    <property type="evidence" value="ECO:0000314"/>
    <property type="project" value="MGI"/>
</dbReference>
<dbReference type="GO" id="GO:0031625">
    <property type="term" value="F:ubiquitin protein ligase binding"/>
    <property type="evidence" value="ECO:0007669"/>
    <property type="project" value="Ensembl"/>
</dbReference>
<dbReference type="GO" id="GO:0038065">
    <property type="term" value="P:collagen-activated signaling pathway"/>
    <property type="evidence" value="ECO:0000315"/>
    <property type="project" value="MGI"/>
</dbReference>
<dbReference type="GO" id="GO:0038063">
    <property type="term" value="P:collagen-activated tyrosine kinase receptor signaling pathway"/>
    <property type="evidence" value="ECO:0000315"/>
    <property type="project" value="MGI"/>
</dbReference>
<dbReference type="GO" id="GO:0045779">
    <property type="term" value="P:negative regulation of bone resorption"/>
    <property type="evidence" value="ECO:0000315"/>
    <property type="project" value="MGI"/>
</dbReference>
<dbReference type="GO" id="GO:0045671">
    <property type="term" value="P:negative regulation of osteoclast differentiation"/>
    <property type="evidence" value="ECO:0000315"/>
    <property type="project" value="MGI"/>
</dbReference>
<dbReference type="GO" id="GO:0090331">
    <property type="term" value="P:negative regulation of platelet aggregation"/>
    <property type="evidence" value="ECO:0000315"/>
    <property type="project" value="MGI"/>
</dbReference>
<dbReference type="GO" id="GO:0009968">
    <property type="term" value="P:negative regulation of signal transduction"/>
    <property type="evidence" value="ECO:0000315"/>
    <property type="project" value="MGI"/>
</dbReference>
<dbReference type="GO" id="GO:0030168">
    <property type="term" value="P:platelet activation"/>
    <property type="evidence" value="ECO:0000315"/>
    <property type="project" value="MGI"/>
</dbReference>
<dbReference type="GO" id="GO:0070527">
    <property type="term" value="P:platelet aggregation"/>
    <property type="evidence" value="ECO:0000315"/>
    <property type="project" value="MGI"/>
</dbReference>
<dbReference type="GO" id="GO:0045670">
    <property type="term" value="P:regulation of osteoclast differentiation"/>
    <property type="evidence" value="ECO:0000315"/>
    <property type="project" value="CACAO"/>
</dbReference>
<dbReference type="GO" id="GO:0051279">
    <property type="term" value="P:regulation of release of sequestered calcium ion into cytosol"/>
    <property type="evidence" value="ECO:0000315"/>
    <property type="project" value="MGI"/>
</dbReference>
<dbReference type="GO" id="GO:0007165">
    <property type="term" value="P:signal transduction"/>
    <property type="evidence" value="ECO:0000315"/>
    <property type="project" value="MGI"/>
</dbReference>
<dbReference type="CDD" id="cd07067">
    <property type="entry name" value="HP_PGM_like"/>
    <property type="match status" value="1"/>
</dbReference>
<dbReference type="CDD" id="cd11936">
    <property type="entry name" value="SH3_UBASH3B"/>
    <property type="match status" value="1"/>
</dbReference>
<dbReference type="CDD" id="cd14301">
    <property type="entry name" value="UBA_UBS3B"/>
    <property type="match status" value="1"/>
</dbReference>
<dbReference type="FunFam" id="3.40.50.1240:FF:000008">
    <property type="entry name" value="Ubiquitin associated and SH3 domain containing B"/>
    <property type="match status" value="1"/>
</dbReference>
<dbReference type="FunFam" id="2.30.30.40:FF:000052">
    <property type="entry name" value="Ubiquitin-associated and SH3 domain-containing protein B"/>
    <property type="match status" value="1"/>
</dbReference>
<dbReference type="FunFam" id="3.90.1140.10:FF:000001">
    <property type="entry name" value="Ubiquitin-associated and SH3 domain-containing protein B"/>
    <property type="match status" value="1"/>
</dbReference>
<dbReference type="FunFam" id="1.10.8.10:FF:000051">
    <property type="entry name" value="ubiquitin-associated and SH3 domain-containing protein B"/>
    <property type="match status" value="1"/>
</dbReference>
<dbReference type="Gene3D" id="3.90.1140.10">
    <property type="entry name" value="Cyclic phosphodiesterase"/>
    <property type="match status" value="1"/>
</dbReference>
<dbReference type="Gene3D" id="1.10.8.10">
    <property type="entry name" value="DNA helicase RuvA subunit, C-terminal domain"/>
    <property type="match status" value="1"/>
</dbReference>
<dbReference type="Gene3D" id="3.40.50.1240">
    <property type="entry name" value="Phosphoglycerate mutase-like"/>
    <property type="match status" value="1"/>
</dbReference>
<dbReference type="Gene3D" id="2.30.30.40">
    <property type="entry name" value="SH3 Domains"/>
    <property type="match status" value="1"/>
</dbReference>
<dbReference type="InterPro" id="IPR013078">
    <property type="entry name" value="His_Pase_superF_clade-1"/>
</dbReference>
<dbReference type="InterPro" id="IPR029033">
    <property type="entry name" value="His_PPase_superfam"/>
</dbReference>
<dbReference type="InterPro" id="IPR051710">
    <property type="entry name" value="Phosphatase_SH3-domain"/>
</dbReference>
<dbReference type="InterPro" id="IPR036028">
    <property type="entry name" value="SH3-like_dom_sf"/>
</dbReference>
<dbReference type="InterPro" id="IPR001452">
    <property type="entry name" value="SH3_domain"/>
</dbReference>
<dbReference type="InterPro" id="IPR015940">
    <property type="entry name" value="UBA"/>
</dbReference>
<dbReference type="InterPro" id="IPR009060">
    <property type="entry name" value="UBA-like_sf"/>
</dbReference>
<dbReference type="InterPro" id="IPR035632">
    <property type="entry name" value="UBASH3B_SH3"/>
</dbReference>
<dbReference type="PANTHER" id="PTHR16469">
    <property type="entry name" value="UBIQUITIN-ASSOCIATED AND SH3 DOMAIN-CONTAINING BA-RELATED"/>
    <property type="match status" value="1"/>
</dbReference>
<dbReference type="PANTHER" id="PTHR16469:SF29">
    <property type="entry name" value="UBIQUITIN-ASSOCIATED AND SH3 DOMAIN-CONTAINING PROTEIN B"/>
    <property type="match status" value="1"/>
</dbReference>
<dbReference type="Pfam" id="PF00300">
    <property type="entry name" value="His_Phos_1"/>
    <property type="match status" value="1"/>
</dbReference>
<dbReference type="Pfam" id="PF14604">
    <property type="entry name" value="SH3_9"/>
    <property type="match status" value="1"/>
</dbReference>
<dbReference type="Pfam" id="PF22562">
    <property type="entry name" value="UBA_7"/>
    <property type="match status" value="1"/>
</dbReference>
<dbReference type="SMART" id="SM00326">
    <property type="entry name" value="SH3"/>
    <property type="match status" value="1"/>
</dbReference>
<dbReference type="SMART" id="SM00165">
    <property type="entry name" value="UBA"/>
    <property type="match status" value="1"/>
</dbReference>
<dbReference type="SUPFAM" id="SSF53254">
    <property type="entry name" value="Phosphoglycerate mutase-like"/>
    <property type="match status" value="1"/>
</dbReference>
<dbReference type="SUPFAM" id="SSF50044">
    <property type="entry name" value="SH3-domain"/>
    <property type="match status" value="1"/>
</dbReference>
<dbReference type="SUPFAM" id="SSF46934">
    <property type="entry name" value="UBA-like"/>
    <property type="match status" value="1"/>
</dbReference>
<dbReference type="PROSITE" id="PS50002">
    <property type="entry name" value="SH3"/>
    <property type="match status" value="1"/>
</dbReference>
<dbReference type="PROSITE" id="PS50030">
    <property type="entry name" value="UBA"/>
    <property type="match status" value="1"/>
</dbReference>
<reference key="1">
    <citation type="submission" date="2001-12" db="EMBL/GenBank/DDBJ databases">
        <title>NF-E2 inducible megakaryocyte specific novel gene.</title>
        <authorList>
            <person name="Nagata Y."/>
            <person name="Oda M."/>
            <person name="Haruta H."/>
            <person name="Todokoro K."/>
        </authorList>
    </citation>
    <scope>NUCLEOTIDE SEQUENCE [MRNA] (ISOFORM 1)</scope>
    <source>
        <tissue>Megakaryocyte</tissue>
    </source>
</reference>
<reference key="2">
    <citation type="journal article" date="2005" name="Science">
        <title>The transcriptional landscape of the mammalian genome.</title>
        <authorList>
            <person name="Carninci P."/>
            <person name="Kasukawa T."/>
            <person name="Katayama S."/>
            <person name="Gough J."/>
            <person name="Frith M.C."/>
            <person name="Maeda N."/>
            <person name="Oyama R."/>
            <person name="Ravasi T."/>
            <person name="Lenhard B."/>
            <person name="Wells C."/>
            <person name="Kodzius R."/>
            <person name="Shimokawa K."/>
            <person name="Bajic V.B."/>
            <person name="Brenner S.E."/>
            <person name="Batalov S."/>
            <person name="Forrest A.R."/>
            <person name="Zavolan M."/>
            <person name="Davis M.J."/>
            <person name="Wilming L.G."/>
            <person name="Aidinis V."/>
            <person name="Allen J.E."/>
            <person name="Ambesi-Impiombato A."/>
            <person name="Apweiler R."/>
            <person name="Aturaliya R.N."/>
            <person name="Bailey T.L."/>
            <person name="Bansal M."/>
            <person name="Baxter L."/>
            <person name="Beisel K.W."/>
            <person name="Bersano T."/>
            <person name="Bono H."/>
            <person name="Chalk A.M."/>
            <person name="Chiu K.P."/>
            <person name="Choudhary V."/>
            <person name="Christoffels A."/>
            <person name="Clutterbuck D.R."/>
            <person name="Crowe M.L."/>
            <person name="Dalla E."/>
            <person name="Dalrymple B.P."/>
            <person name="de Bono B."/>
            <person name="Della Gatta G."/>
            <person name="di Bernardo D."/>
            <person name="Down T."/>
            <person name="Engstrom P."/>
            <person name="Fagiolini M."/>
            <person name="Faulkner G."/>
            <person name="Fletcher C.F."/>
            <person name="Fukushima T."/>
            <person name="Furuno M."/>
            <person name="Futaki S."/>
            <person name="Gariboldi M."/>
            <person name="Georgii-Hemming P."/>
            <person name="Gingeras T.R."/>
            <person name="Gojobori T."/>
            <person name="Green R.E."/>
            <person name="Gustincich S."/>
            <person name="Harbers M."/>
            <person name="Hayashi Y."/>
            <person name="Hensch T.K."/>
            <person name="Hirokawa N."/>
            <person name="Hill D."/>
            <person name="Huminiecki L."/>
            <person name="Iacono M."/>
            <person name="Ikeo K."/>
            <person name="Iwama A."/>
            <person name="Ishikawa T."/>
            <person name="Jakt M."/>
            <person name="Kanapin A."/>
            <person name="Katoh M."/>
            <person name="Kawasawa Y."/>
            <person name="Kelso J."/>
            <person name="Kitamura H."/>
            <person name="Kitano H."/>
            <person name="Kollias G."/>
            <person name="Krishnan S.P."/>
            <person name="Kruger A."/>
            <person name="Kummerfeld S.K."/>
            <person name="Kurochkin I.V."/>
            <person name="Lareau L.F."/>
            <person name="Lazarevic D."/>
            <person name="Lipovich L."/>
            <person name="Liu J."/>
            <person name="Liuni S."/>
            <person name="McWilliam S."/>
            <person name="Madan Babu M."/>
            <person name="Madera M."/>
            <person name="Marchionni L."/>
            <person name="Matsuda H."/>
            <person name="Matsuzawa S."/>
            <person name="Miki H."/>
            <person name="Mignone F."/>
            <person name="Miyake S."/>
            <person name="Morris K."/>
            <person name="Mottagui-Tabar S."/>
            <person name="Mulder N."/>
            <person name="Nakano N."/>
            <person name="Nakauchi H."/>
            <person name="Ng P."/>
            <person name="Nilsson R."/>
            <person name="Nishiguchi S."/>
            <person name="Nishikawa S."/>
            <person name="Nori F."/>
            <person name="Ohara O."/>
            <person name="Okazaki Y."/>
            <person name="Orlando V."/>
            <person name="Pang K.C."/>
            <person name="Pavan W.J."/>
            <person name="Pavesi G."/>
            <person name="Pesole G."/>
            <person name="Petrovsky N."/>
            <person name="Piazza S."/>
            <person name="Reed J."/>
            <person name="Reid J.F."/>
            <person name="Ring B.Z."/>
            <person name="Ringwald M."/>
            <person name="Rost B."/>
            <person name="Ruan Y."/>
            <person name="Salzberg S.L."/>
            <person name="Sandelin A."/>
            <person name="Schneider C."/>
            <person name="Schoenbach C."/>
            <person name="Sekiguchi K."/>
            <person name="Semple C.A."/>
            <person name="Seno S."/>
            <person name="Sessa L."/>
            <person name="Sheng Y."/>
            <person name="Shibata Y."/>
            <person name="Shimada H."/>
            <person name="Shimada K."/>
            <person name="Silva D."/>
            <person name="Sinclair B."/>
            <person name="Sperling S."/>
            <person name="Stupka E."/>
            <person name="Sugiura K."/>
            <person name="Sultana R."/>
            <person name="Takenaka Y."/>
            <person name="Taki K."/>
            <person name="Tammoja K."/>
            <person name="Tan S.L."/>
            <person name="Tang S."/>
            <person name="Taylor M.S."/>
            <person name="Tegner J."/>
            <person name="Teichmann S.A."/>
            <person name="Ueda H.R."/>
            <person name="van Nimwegen E."/>
            <person name="Verardo R."/>
            <person name="Wei C.L."/>
            <person name="Yagi K."/>
            <person name="Yamanishi H."/>
            <person name="Zabarovsky E."/>
            <person name="Zhu S."/>
            <person name="Zimmer A."/>
            <person name="Hide W."/>
            <person name="Bult C."/>
            <person name="Grimmond S.M."/>
            <person name="Teasdale R.D."/>
            <person name="Liu E.T."/>
            <person name="Brusic V."/>
            <person name="Quackenbush J."/>
            <person name="Wahlestedt C."/>
            <person name="Mattick J.S."/>
            <person name="Hume D.A."/>
            <person name="Kai C."/>
            <person name="Sasaki D."/>
            <person name="Tomaru Y."/>
            <person name="Fukuda S."/>
            <person name="Kanamori-Katayama M."/>
            <person name="Suzuki M."/>
            <person name="Aoki J."/>
            <person name="Arakawa T."/>
            <person name="Iida J."/>
            <person name="Imamura K."/>
            <person name="Itoh M."/>
            <person name="Kato T."/>
            <person name="Kawaji H."/>
            <person name="Kawagashira N."/>
            <person name="Kawashima T."/>
            <person name="Kojima M."/>
            <person name="Kondo S."/>
            <person name="Konno H."/>
            <person name="Nakano K."/>
            <person name="Ninomiya N."/>
            <person name="Nishio T."/>
            <person name="Okada M."/>
            <person name="Plessy C."/>
            <person name="Shibata K."/>
            <person name="Shiraki T."/>
            <person name="Suzuki S."/>
            <person name="Tagami M."/>
            <person name="Waki K."/>
            <person name="Watahiki A."/>
            <person name="Okamura-Oho Y."/>
            <person name="Suzuki H."/>
            <person name="Kawai J."/>
            <person name="Hayashizaki Y."/>
        </authorList>
    </citation>
    <scope>NUCLEOTIDE SEQUENCE [LARGE SCALE MRNA] (ISOFORMS 1 AND 2)</scope>
    <source>
        <strain>C57BL/6J</strain>
        <strain>NOD</strain>
        <tissue>Bone marrow</tissue>
        <tissue>Cerebellum</tissue>
        <tissue>Dendritic cell</tissue>
        <tissue>Diencephalon</tissue>
        <tissue>Embryo</tissue>
    </source>
</reference>
<reference key="3">
    <citation type="journal article" date="2004" name="Genome Res.">
        <title>The status, quality, and expansion of the NIH full-length cDNA project: the Mammalian Gene Collection (MGC).</title>
        <authorList>
            <consortium name="The MGC Project Team"/>
        </authorList>
    </citation>
    <scope>NUCLEOTIDE SEQUENCE [LARGE SCALE MRNA] (ISOFORM 1)</scope>
    <source>
        <tissue>Embryonic limb</tissue>
    </source>
</reference>
<reference key="4">
    <citation type="journal article" date="2002" name="Mol. Cell. Biol.">
        <title>Identification, cDNA cloning, and targeted deletion of p70, a novel, ubiquitously expressed SH3 domain-containing protein.</title>
        <authorList>
            <person name="Carpino N."/>
            <person name="Kobayashi R."/>
            <person name="Zang H."/>
            <person name="Takahashi Y."/>
            <person name="Jou S.-T."/>
            <person name="Feng J."/>
            <person name="Nakajima H."/>
            <person name="Ihle J.N."/>
        </authorList>
    </citation>
    <scope>PROTEIN SEQUENCE OF 93-101; 199-215; 403-410; 482-493 AND 495-515</scope>
    <scope>INTERACTION WITH JAK2</scope>
    <scope>TISSUE SPECIFICITY</scope>
</reference>
<reference key="5">
    <citation type="journal article" date="2004" name="Immunity">
        <title>Regulation of ZAP-70 activation and TCR signaling by two related proteins, Sts-1 and Sts-2.</title>
        <authorList>
            <person name="Carpino N."/>
            <person name="Turner S."/>
            <person name="Mekala D."/>
            <person name="Takahashi Y."/>
            <person name="Zang H."/>
            <person name="Geiger T.L."/>
            <person name="Doherty P."/>
            <person name="Ihle J.N."/>
        </authorList>
    </citation>
    <scope>FUNCTION</scope>
    <scope>TISSUE SPECIFICITY</scope>
</reference>
<reference key="6">
    <citation type="journal article" date="2009" name="Mol. Immunol.">
        <title>The Sts proteins target tyrosine phosphorylated, ubiquitinated proteins within TCR signaling pathways.</title>
        <authorList>
            <person name="Carpino N."/>
            <person name="Chen Y."/>
            <person name="Nassar N."/>
            <person name="Oh H.W."/>
        </authorList>
    </citation>
    <scope>FUNCTION</scope>
    <scope>DISRUPTION PHENOTYPE</scope>
</reference>
<reference key="7">
    <citation type="journal article" date="2010" name="Blood">
        <title>A novel histidine tyrosine phosphatase, TULA-2, associates with Syk and negatively regulates GPVI signaling in platelets.</title>
        <authorList>
            <person name="Thomas D.H."/>
            <person name="Getz T.M."/>
            <person name="Newman T.N."/>
            <person name="Dangelmaier C.A."/>
            <person name="Carpino N."/>
            <person name="Kunapuli S.P."/>
            <person name="Tsygankov A.Y."/>
            <person name="Daniel J.L."/>
        </authorList>
    </citation>
    <scope>FUNCTION</scope>
    <scope>DISRUPTION PHENOTYPE</scope>
</reference>
<reference key="8">
    <citation type="journal article" date="2010" name="Cell">
        <title>A tissue-specific atlas of mouse protein phosphorylation and expression.</title>
        <authorList>
            <person name="Huttlin E.L."/>
            <person name="Jedrychowski M.P."/>
            <person name="Elias J.E."/>
            <person name="Goswami T."/>
            <person name="Rad R."/>
            <person name="Beausoleil S.A."/>
            <person name="Villen J."/>
            <person name="Haas W."/>
            <person name="Sowa M.E."/>
            <person name="Gygi S.P."/>
        </authorList>
    </citation>
    <scope>IDENTIFICATION BY MASS SPECTROMETRY [LARGE SCALE ANALYSIS]</scope>
    <source>
        <tissue>Brain</tissue>
        <tissue>Spleen</tissue>
    </source>
</reference>
<reference key="9">
    <citation type="journal article" date="2010" name="J. Biol. Chem.">
        <title>Determination of the substrate specificity of protein-tyrosine phosphatase TULA-2 and identification of Syk as a TULA-2 substrate.</title>
        <authorList>
            <person name="Chen X."/>
            <person name="Ren L."/>
            <person name="Kim S."/>
            <person name="Carpino N."/>
            <person name="Daniel J.L."/>
            <person name="Kunapuli S.P."/>
            <person name="Tsygankov A.Y."/>
            <person name="Pei D."/>
        </authorList>
    </citation>
    <scope>CATALYTIC ACTIVITY</scope>
    <scope>SUBSTRATE SPECIFICITY</scope>
</reference>
<reference key="10">
    <citation type="journal article" date="2016" name="J. Exp. Med.">
        <title>Otud7b facilitates T cell activation and inflammatory responses by regulating Zap70 ubiquitination.</title>
        <authorList>
            <person name="Hu H."/>
            <person name="Wang H."/>
            <person name="Xiao Y."/>
            <person name="Jin J."/>
            <person name="Chang J.H."/>
            <person name="Zou Q."/>
            <person name="Xie X."/>
            <person name="Cheng X."/>
            <person name="Sun S.C."/>
        </authorList>
    </citation>
    <scope>INTERACTION WITH ZAP70</scope>
</reference>
<reference key="11">
    <citation type="journal article" date="2010" name="Acta Crystallogr. F">
        <title>The 1.35 A resolution structure of the phosphatase domain of the suppressor of T-cell receptor signaling protein in complex with sulfate.</title>
        <authorList>
            <person name="Jakoncic J."/>
            <person name="Sondgeroth B."/>
            <person name="Carpino N."/>
            <person name="Nassar N."/>
        </authorList>
    </citation>
    <scope>X-RAY CRYSTALLOGRAPHY (1.35 ANGSTROMS) OF 373-636 IN COMPLEX WITH SULFATE</scope>
    <scope>SUBUNIT</scope>
    <scope>ACTIVE SITE</scope>
</reference>
<reference key="12">
    <citation type="journal article" date="2007" name="Mol. Cell">
        <title>A phosphatase activity of Sts-1 contributes to the suppression of TCR signaling.</title>
        <authorList>
            <person name="Mikhailik A."/>
            <person name="Ford B."/>
            <person name="Keller J."/>
            <person name="Chen Y."/>
            <person name="Nassar N."/>
            <person name="Carpino N."/>
        </authorList>
    </citation>
    <scope>X-RAY CRYSTALLOGRAPHY (1.82 ANGSTROMS) OF 373-633</scope>
    <scope>SUBUNIT</scope>
    <scope>FUNCTION</scope>
    <scope>PHOSPHATASE ACTIVITY</scope>
    <scope>ACTIVE SITE</scope>
</reference>